<name>ARNB_YERPA</name>
<gene>
    <name evidence="1" type="primary">arnB</name>
    <name type="ordered locus">YPA_1766</name>
</gene>
<protein>
    <recommendedName>
        <fullName evidence="1">UDP-4-amino-4-deoxy-L-arabinose--oxoglutarate aminotransferase</fullName>
        <ecNumber evidence="1">2.6.1.87</ecNumber>
    </recommendedName>
    <alternativeName>
        <fullName evidence="1">UDP-(beta-L-threo-pentapyranosyl-4''-ulose diphosphate) aminotransferase</fullName>
        <shortName evidence="1">UDP-Ara4O aminotransferase</shortName>
    </alternativeName>
    <alternativeName>
        <fullName evidence="1">UDP-4-amino-4-deoxy-L-arabinose aminotransferase</fullName>
    </alternativeName>
</protein>
<comment type="function">
    <text evidence="1">Catalyzes the conversion of UDP-4-keto-arabinose (UDP-Ara4O) to UDP-4-amino-4-deoxy-L-arabinose (UDP-L-Ara4N). The modified arabinose is attached to lipid A and is required for resistance to polymyxin and cationic antimicrobial peptides.</text>
</comment>
<comment type="catalytic activity">
    <reaction evidence="1">
        <text>UDP-4-amino-4-deoxy-beta-L-arabinose + 2-oxoglutarate = UDP-beta-L-threo-pentopyranos-4-ulose + L-glutamate</text>
        <dbReference type="Rhea" id="RHEA:24710"/>
        <dbReference type="ChEBI" id="CHEBI:16810"/>
        <dbReference type="ChEBI" id="CHEBI:29985"/>
        <dbReference type="ChEBI" id="CHEBI:58708"/>
        <dbReference type="ChEBI" id="CHEBI:58710"/>
        <dbReference type="EC" id="2.6.1.87"/>
    </reaction>
</comment>
<comment type="cofactor">
    <cofactor evidence="1">
        <name>pyridoxal 5'-phosphate</name>
        <dbReference type="ChEBI" id="CHEBI:597326"/>
    </cofactor>
</comment>
<comment type="pathway">
    <text evidence="1">Nucleotide-sugar biosynthesis; UDP-4-deoxy-4-formamido-beta-L-arabinose biosynthesis; UDP-4-deoxy-4-formamido-beta-L-arabinose from UDP-alpha-D-glucuronate: step 2/3.</text>
</comment>
<comment type="pathway">
    <text evidence="1">Bacterial outer membrane biogenesis; lipopolysaccharide biosynthesis.</text>
</comment>
<comment type="subunit">
    <text evidence="1">Homodimer.</text>
</comment>
<comment type="similarity">
    <text evidence="1">Belongs to the DegT/DnrJ/EryC1 family. ArnB subfamily.</text>
</comment>
<accession>Q1C740</accession>
<dbReference type="EC" id="2.6.1.87" evidence="1"/>
<dbReference type="EMBL" id="CP000308">
    <property type="protein sequence ID" value="ABG13732.1"/>
    <property type="molecule type" value="Genomic_DNA"/>
</dbReference>
<dbReference type="RefSeq" id="WP_002211825.1">
    <property type="nucleotide sequence ID" value="NZ_CP009906.1"/>
</dbReference>
<dbReference type="SMR" id="Q1C740"/>
<dbReference type="GeneID" id="57976255"/>
<dbReference type="KEGG" id="ypa:YPA_1766"/>
<dbReference type="UniPathway" id="UPA00030"/>
<dbReference type="UniPathway" id="UPA00032">
    <property type="reaction ID" value="UER00493"/>
</dbReference>
<dbReference type="Proteomes" id="UP000001971">
    <property type="component" value="Chromosome"/>
</dbReference>
<dbReference type="GO" id="GO:0016020">
    <property type="term" value="C:membrane"/>
    <property type="evidence" value="ECO:0007669"/>
    <property type="project" value="GOC"/>
</dbReference>
<dbReference type="GO" id="GO:0030170">
    <property type="term" value="F:pyridoxal phosphate binding"/>
    <property type="evidence" value="ECO:0007669"/>
    <property type="project" value="TreeGrafter"/>
</dbReference>
<dbReference type="GO" id="GO:0099620">
    <property type="term" value="F:UDP-4-amino-4-deoxy-L-arabinose aminotransferase"/>
    <property type="evidence" value="ECO:0007669"/>
    <property type="project" value="UniProtKB-EC"/>
</dbReference>
<dbReference type="GO" id="GO:0009245">
    <property type="term" value="P:lipid A biosynthetic process"/>
    <property type="evidence" value="ECO:0007669"/>
    <property type="project" value="UniProtKB-KW"/>
</dbReference>
<dbReference type="GO" id="GO:0009103">
    <property type="term" value="P:lipopolysaccharide biosynthetic process"/>
    <property type="evidence" value="ECO:0007669"/>
    <property type="project" value="UniProtKB-UniRule"/>
</dbReference>
<dbReference type="GO" id="GO:0046677">
    <property type="term" value="P:response to antibiotic"/>
    <property type="evidence" value="ECO:0007669"/>
    <property type="project" value="UniProtKB-KW"/>
</dbReference>
<dbReference type="CDD" id="cd00616">
    <property type="entry name" value="AHBA_syn"/>
    <property type="match status" value="1"/>
</dbReference>
<dbReference type="FunFam" id="3.40.640.10:FF:000040">
    <property type="entry name" value="UDP-4-amino-4-deoxy-L-arabinose--oxoglutarate aminotransferase"/>
    <property type="match status" value="1"/>
</dbReference>
<dbReference type="FunFam" id="3.90.1150.10:FF:000030">
    <property type="entry name" value="UDP-4-amino-4-deoxy-L-arabinose--oxoglutarate aminotransferase"/>
    <property type="match status" value="1"/>
</dbReference>
<dbReference type="Gene3D" id="3.90.1150.10">
    <property type="entry name" value="Aspartate Aminotransferase, domain 1"/>
    <property type="match status" value="1"/>
</dbReference>
<dbReference type="Gene3D" id="3.40.640.10">
    <property type="entry name" value="Type I PLP-dependent aspartate aminotransferase-like (Major domain)"/>
    <property type="match status" value="1"/>
</dbReference>
<dbReference type="HAMAP" id="MF_01167">
    <property type="entry name" value="ArnB_transfer"/>
    <property type="match status" value="1"/>
</dbReference>
<dbReference type="InterPro" id="IPR022850">
    <property type="entry name" value="ArnB_NH2Trfase"/>
</dbReference>
<dbReference type="InterPro" id="IPR000653">
    <property type="entry name" value="DegT/StrS_aminotransferase"/>
</dbReference>
<dbReference type="InterPro" id="IPR015424">
    <property type="entry name" value="PyrdxlP-dep_Trfase"/>
</dbReference>
<dbReference type="InterPro" id="IPR015421">
    <property type="entry name" value="PyrdxlP-dep_Trfase_major"/>
</dbReference>
<dbReference type="InterPro" id="IPR015422">
    <property type="entry name" value="PyrdxlP-dep_Trfase_small"/>
</dbReference>
<dbReference type="NCBIfam" id="NF008658">
    <property type="entry name" value="PRK11658.1"/>
    <property type="match status" value="1"/>
</dbReference>
<dbReference type="PANTHER" id="PTHR30244">
    <property type="entry name" value="TRANSAMINASE"/>
    <property type="match status" value="1"/>
</dbReference>
<dbReference type="PANTHER" id="PTHR30244:SF41">
    <property type="entry name" value="UDP-4-AMINO-4-DEOXY-L-ARABINOSE--OXOGLUTARATE AMINOTRANSFERASE"/>
    <property type="match status" value="1"/>
</dbReference>
<dbReference type="Pfam" id="PF01041">
    <property type="entry name" value="DegT_DnrJ_EryC1"/>
    <property type="match status" value="1"/>
</dbReference>
<dbReference type="PIRSF" id="PIRSF000390">
    <property type="entry name" value="PLP_StrS"/>
    <property type="match status" value="1"/>
</dbReference>
<dbReference type="SUPFAM" id="SSF53383">
    <property type="entry name" value="PLP-dependent transferases"/>
    <property type="match status" value="1"/>
</dbReference>
<feature type="chain" id="PRO_1000065693" description="UDP-4-amino-4-deoxy-L-arabinose--oxoglutarate aminotransferase">
    <location>
        <begin position="1"/>
        <end position="384"/>
    </location>
</feature>
<feature type="modified residue" description="N6-(pyridoxal phosphate)lysine" evidence="1">
    <location>
        <position position="182"/>
    </location>
</feature>
<reference key="1">
    <citation type="journal article" date="2006" name="J. Bacteriol.">
        <title>Complete genome sequence of Yersinia pestis strains Antiqua and Nepal516: evidence of gene reduction in an emerging pathogen.</title>
        <authorList>
            <person name="Chain P.S.G."/>
            <person name="Hu P."/>
            <person name="Malfatti S.A."/>
            <person name="Radnedge L."/>
            <person name="Larimer F."/>
            <person name="Vergez L.M."/>
            <person name="Worsham P."/>
            <person name="Chu M.C."/>
            <person name="Andersen G.L."/>
        </authorList>
    </citation>
    <scope>NUCLEOTIDE SEQUENCE [LARGE SCALE GENOMIC DNA]</scope>
    <source>
        <strain>Antiqua</strain>
    </source>
</reference>
<proteinExistence type="inferred from homology"/>
<organism>
    <name type="scientific">Yersinia pestis bv. Antiqua (strain Antiqua)</name>
    <dbReference type="NCBI Taxonomy" id="360102"/>
    <lineage>
        <taxon>Bacteria</taxon>
        <taxon>Pseudomonadati</taxon>
        <taxon>Pseudomonadota</taxon>
        <taxon>Gammaproteobacteria</taxon>
        <taxon>Enterobacterales</taxon>
        <taxon>Yersiniaceae</taxon>
        <taxon>Yersinia</taxon>
    </lineage>
</organism>
<sequence>MQSFLPFSRPAIGSEEINAVANVLGSGWITTGPQNHQLETDFCQIFGCKHAIAVCSATAGMHITLLALGIGPGDEVITPSQTWVSTINMIVLLGAEPVMVDVDRDTLMVNAAAIEAAITPNTKAIIPVHYAGAPCDLDALRQISQRHGIPLIEDAAHAVGTRYRDQWIGEQGTAIFSFHAIKNITCAEGGLVATDDDELAARVRRLKFHGLGVDAFDRQIQGRSPQAEVVEPGYKYNLSDIHAAIAVVQLRRLPEINARRQALVASYHKALAHLPLQPLALPHYSHQHAWHLFMVRVDEERCGISRDQLMACLKDMGIGSGLHFRAVHSQKYYRERYPHLCLPNTEWNSARLCTLPLFPDMLDSDIERVANALTTIIGSHRVTK</sequence>
<evidence type="ECO:0000255" key="1">
    <source>
        <dbReference type="HAMAP-Rule" id="MF_01167"/>
    </source>
</evidence>
<keyword id="KW-0032">Aminotransferase</keyword>
<keyword id="KW-0046">Antibiotic resistance</keyword>
<keyword id="KW-0441">Lipid A biosynthesis</keyword>
<keyword id="KW-0444">Lipid biosynthesis</keyword>
<keyword id="KW-0443">Lipid metabolism</keyword>
<keyword id="KW-0448">Lipopolysaccharide biosynthesis</keyword>
<keyword id="KW-0663">Pyridoxal phosphate</keyword>
<keyword id="KW-0808">Transferase</keyword>